<sequence>MTPIRHLTILGSTGSIGESTLDVVARHPDRFQAVALTADKNVEKMFEQCKRFYPSYAVMLNAQSAEQLEAKLRVAGLGTMVLSGIESLEKVASLPEIDTVMAAIVGAAGIRPTLSAAQAGKHILLANKETLVMAGRIFMDTIRQYHATLLPIDSEHNAIFQSLPQHYNGDLISSGVRRILLTASGGPFHKADLQTLSTVTPEQACAHPNWVMGRKISVDSATMMNKGLEVIEAHWLFNVEPEKIQVVVHPQSVIHSMVEYIDGSVLAQLGNPDMRTPIAHALGYPERIESGVQSMDIFKIAQLNFEAPDFERFPCLRLAYEALSKGGNMPAVLNAANEVAVEVFLAGKIPFTVIPAIIEHVMESIDRQEITDLEDVLAADLRARETARKWLDTQAWQRGQSGAPLFRAEQWNG</sequence>
<dbReference type="EC" id="1.1.1.267" evidence="1"/>
<dbReference type="EMBL" id="CP000450">
    <property type="protein sequence ID" value="ABI60252.1"/>
    <property type="molecule type" value="Genomic_DNA"/>
</dbReference>
<dbReference type="RefSeq" id="WP_011635049.1">
    <property type="nucleotide sequence ID" value="NC_008344.1"/>
</dbReference>
<dbReference type="SMR" id="Q0AEI0"/>
<dbReference type="STRING" id="335283.Neut_2029"/>
<dbReference type="KEGG" id="net:Neut_2029"/>
<dbReference type="eggNOG" id="COG0743">
    <property type="taxonomic scope" value="Bacteria"/>
</dbReference>
<dbReference type="HOGENOM" id="CLU_035714_4_0_4"/>
<dbReference type="OrthoDB" id="9806546at2"/>
<dbReference type="UniPathway" id="UPA00056">
    <property type="reaction ID" value="UER00092"/>
</dbReference>
<dbReference type="Proteomes" id="UP000001966">
    <property type="component" value="Chromosome"/>
</dbReference>
<dbReference type="GO" id="GO:0030604">
    <property type="term" value="F:1-deoxy-D-xylulose-5-phosphate reductoisomerase activity"/>
    <property type="evidence" value="ECO:0007669"/>
    <property type="project" value="UniProtKB-UniRule"/>
</dbReference>
<dbReference type="GO" id="GO:0030145">
    <property type="term" value="F:manganese ion binding"/>
    <property type="evidence" value="ECO:0007669"/>
    <property type="project" value="TreeGrafter"/>
</dbReference>
<dbReference type="GO" id="GO:0070402">
    <property type="term" value="F:NADPH binding"/>
    <property type="evidence" value="ECO:0007669"/>
    <property type="project" value="InterPro"/>
</dbReference>
<dbReference type="GO" id="GO:0051484">
    <property type="term" value="P:isopentenyl diphosphate biosynthetic process, methylerythritol 4-phosphate pathway involved in terpenoid biosynthetic process"/>
    <property type="evidence" value="ECO:0007669"/>
    <property type="project" value="TreeGrafter"/>
</dbReference>
<dbReference type="FunFam" id="1.10.1740.10:FF:000004">
    <property type="entry name" value="1-deoxy-D-xylulose 5-phosphate reductoisomerase"/>
    <property type="match status" value="1"/>
</dbReference>
<dbReference type="FunFam" id="3.40.50.720:FF:000045">
    <property type="entry name" value="1-deoxy-D-xylulose 5-phosphate reductoisomerase"/>
    <property type="match status" value="1"/>
</dbReference>
<dbReference type="Gene3D" id="1.10.1740.10">
    <property type="match status" value="1"/>
</dbReference>
<dbReference type="Gene3D" id="3.40.50.720">
    <property type="entry name" value="NAD(P)-binding Rossmann-like Domain"/>
    <property type="match status" value="1"/>
</dbReference>
<dbReference type="HAMAP" id="MF_00183">
    <property type="entry name" value="DXP_reductoisom"/>
    <property type="match status" value="1"/>
</dbReference>
<dbReference type="InterPro" id="IPR003821">
    <property type="entry name" value="DXP_reductoisomerase"/>
</dbReference>
<dbReference type="InterPro" id="IPR013644">
    <property type="entry name" value="DXP_reductoisomerase_C"/>
</dbReference>
<dbReference type="InterPro" id="IPR013512">
    <property type="entry name" value="DXP_reductoisomerase_N"/>
</dbReference>
<dbReference type="InterPro" id="IPR026877">
    <property type="entry name" value="DXPR_C"/>
</dbReference>
<dbReference type="InterPro" id="IPR036169">
    <property type="entry name" value="DXPR_C_sf"/>
</dbReference>
<dbReference type="InterPro" id="IPR036291">
    <property type="entry name" value="NAD(P)-bd_dom_sf"/>
</dbReference>
<dbReference type="NCBIfam" id="TIGR00243">
    <property type="entry name" value="Dxr"/>
    <property type="match status" value="1"/>
</dbReference>
<dbReference type="NCBIfam" id="NF003938">
    <property type="entry name" value="PRK05447.1-1"/>
    <property type="match status" value="1"/>
</dbReference>
<dbReference type="NCBIfam" id="NF009114">
    <property type="entry name" value="PRK12464.1"/>
    <property type="match status" value="1"/>
</dbReference>
<dbReference type="PANTHER" id="PTHR30525">
    <property type="entry name" value="1-DEOXY-D-XYLULOSE 5-PHOSPHATE REDUCTOISOMERASE"/>
    <property type="match status" value="1"/>
</dbReference>
<dbReference type="PANTHER" id="PTHR30525:SF0">
    <property type="entry name" value="1-DEOXY-D-XYLULOSE 5-PHOSPHATE REDUCTOISOMERASE, CHLOROPLASTIC"/>
    <property type="match status" value="1"/>
</dbReference>
<dbReference type="Pfam" id="PF08436">
    <property type="entry name" value="DXP_redisom_C"/>
    <property type="match status" value="1"/>
</dbReference>
<dbReference type="Pfam" id="PF02670">
    <property type="entry name" value="DXP_reductoisom"/>
    <property type="match status" value="1"/>
</dbReference>
<dbReference type="Pfam" id="PF13288">
    <property type="entry name" value="DXPR_C"/>
    <property type="match status" value="1"/>
</dbReference>
<dbReference type="PIRSF" id="PIRSF006205">
    <property type="entry name" value="Dxp_reductismrs"/>
    <property type="match status" value="1"/>
</dbReference>
<dbReference type="SUPFAM" id="SSF69055">
    <property type="entry name" value="1-deoxy-D-xylulose-5-phosphate reductoisomerase, C-terminal domain"/>
    <property type="match status" value="1"/>
</dbReference>
<dbReference type="SUPFAM" id="SSF55347">
    <property type="entry name" value="Glyceraldehyde-3-phosphate dehydrogenase-like, C-terminal domain"/>
    <property type="match status" value="1"/>
</dbReference>
<dbReference type="SUPFAM" id="SSF51735">
    <property type="entry name" value="NAD(P)-binding Rossmann-fold domains"/>
    <property type="match status" value="1"/>
</dbReference>
<name>DXR_NITEC</name>
<feature type="chain" id="PRO_1000020280" description="1-deoxy-D-xylulose 5-phosphate reductoisomerase">
    <location>
        <begin position="1"/>
        <end position="413"/>
    </location>
</feature>
<feature type="binding site" evidence="1">
    <location>
        <position position="13"/>
    </location>
    <ligand>
        <name>NADPH</name>
        <dbReference type="ChEBI" id="CHEBI:57783"/>
    </ligand>
</feature>
<feature type="binding site" evidence="1">
    <location>
        <position position="14"/>
    </location>
    <ligand>
        <name>NADPH</name>
        <dbReference type="ChEBI" id="CHEBI:57783"/>
    </ligand>
</feature>
<feature type="binding site" evidence="1">
    <location>
        <position position="15"/>
    </location>
    <ligand>
        <name>NADPH</name>
        <dbReference type="ChEBI" id="CHEBI:57783"/>
    </ligand>
</feature>
<feature type="binding site" evidence="1">
    <location>
        <position position="16"/>
    </location>
    <ligand>
        <name>NADPH</name>
        <dbReference type="ChEBI" id="CHEBI:57783"/>
    </ligand>
</feature>
<feature type="binding site" evidence="1">
    <location>
        <position position="40"/>
    </location>
    <ligand>
        <name>NADPH</name>
        <dbReference type="ChEBI" id="CHEBI:57783"/>
    </ligand>
</feature>
<feature type="binding site" evidence="1">
    <location>
        <position position="41"/>
    </location>
    <ligand>
        <name>NADPH</name>
        <dbReference type="ChEBI" id="CHEBI:57783"/>
    </ligand>
</feature>
<feature type="binding site" evidence="1">
    <location>
        <position position="127"/>
    </location>
    <ligand>
        <name>NADPH</name>
        <dbReference type="ChEBI" id="CHEBI:57783"/>
    </ligand>
</feature>
<feature type="binding site" evidence="1">
    <location>
        <position position="128"/>
    </location>
    <ligand>
        <name>1-deoxy-D-xylulose 5-phosphate</name>
        <dbReference type="ChEBI" id="CHEBI:57792"/>
    </ligand>
</feature>
<feature type="binding site" evidence="1">
    <location>
        <position position="129"/>
    </location>
    <ligand>
        <name>NADPH</name>
        <dbReference type="ChEBI" id="CHEBI:57783"/>
    </ligand>
</feature>
<feature type="binding site" evidence="1">
    <location>
        <position position="153"/>
    </location>
    <ligand>
        <name>Mn(2+)</name>
        <dbReference type="ChEBI" id="CHEBI:29035"/>
    </ligand>
</feature>
<feature type="binding site" evidence="1">
    <location>
        <position position="154"/>
    </location>
    <ligand>
        <name>1-deoxy-D-xylulose 5-phosphate</name>
        <dbReference type="ChEBI" id="CHEBI:57792"/>
    </ligand>
</feature>
<feature type="binding site" evidence="1">
    <location>
        <position position="155"/>
    </location>
    <ligand>
        <name>1-deoxy-D-xylulose 5-phosphate</name>
        <dbReference type="ChEBI" id="CHEBI:57792"/>
    </ligand>
</feature>
<feature type="binding site" evidence="1">
    <location>
        <position position="155"/>
    </location>
    <ligand>
        <name>Mn(2+)</name>
        <dbReference type="ChEBI" id="CHEBI:29035"/>
    </ligand>
</feature>
<feature type="binding site" evidence="1">
    <location>
        <position position="184"/>
    </location>
    <ligand>
        <name>1-deoxy-D-xylulose 5-phosphate</name>
        <dbReference type="ChEBI" id="CHEBI:57792"/>
    </ligand>
</feature>
<feature type="binding site" evidence="1">
    <location>
        <position position="207"/>
    </location>
    <ligand>
        <name>1-deoxy-D-xylulose 5-phosphate</name>
        <dbReference type="ChEBI" id="CHEBI:57792"/>
    </ligand>
</feature>
<feature type="binding site" evidence="1">
    <location>
        <position position="213"/>
    </location>
    <ligand>
        <name>NADPH</name>
        <dbReference type="ChEBI" id="CHEBI:57783"/>
    </ligand>
</feature>
<feature type="binding site" evidence="1">
    <location>
        <position position="220"/>
    </location>
    <ligand>
        <name>1-deoxy-D-xylulose 5-phosphate</name>
        <dbReference type="ChEBI" id="CHEBI:57792"/>
    </ligand>
</feature>
<feature type="binding site" evidence="1">
    <location>
        <position position="225"/>
    </location>
    <ligand>
        <name>1-deoxy-D-xylulose 5-phosphate</name>
        <dbReference type="ChEBI" id="CHEBI:57792"/>
    </ligand>
</feature>
<feature type="binding site" evidence="1">
    <location>
        <position position="226"/>
    </location>
    <ligand>
        <name>1-deoxy-D-xylulose 5-phosphate</name>
        <dbReference type="ChEBI" id="CHEBI:57792"/>
    </ligand>
</feature>
<feature type="binding site" evidence="1">
    <location>
        <position position="229"/>
    </location>
    <ligand>
        <name>1-deoxy-D-xylulose 5-phosphate</name>
        <dbReference type="ChEBI" id="CHEBI:57792"/>
    </ligand>
</feature>
<feature type="binding site" evidence="1">
    <location>
        <position position="229"/>
    </location>
    <ligand>
        <name>Mn(2+)</name>
        <dbReference type="ChEBI" id="CHEBI:29035"/>
    </ligand>
</feature>
<reference key="1">
    <citation type="journal article" date="2007" name="Environ. Microbiol.">
        <title>Whole-genome analysis of the ammonia-oxidizing bacterium, Nitrosomonas eutropha C91: implications for niche adaptation.</title>
        <authorList>
            <person name="Stein L.Y."/>
            <person name="Arp D.J."/>
            <person name="Berube P.M."/>
            <person name="Chain P.S."/>
            <person name="Hauser L."/>
            <person name="Jetten M.S."/>
            <person name="Klotz M.G."/>
            <person name="Larimer F.W."/>
            <person name="Norton J.M."/>
            <person name="Op den Camp H.J.M."/>
            <person name="Shin M."/>
            <person name="Wei X."/>
        </authorList>
    </citation>
    <scope>NUCLEOTIDE SEQUENCE [LARGE SCALE GENOMIC DNA]</scope>
    <source>
        <strain>DSM 101675 / C91 / Nm57</strain>
    </source>
</reference>
<organism>
    <name type="scientific">Nitrosomonas eutropha (strain DSM 101675 / C91 / Nm57)</name>
    <dbReference type="NCBI Taxonomy" id="335283"/>
    <lineage>
        <taxon>Bacteria</taxon>
        <taxon>Pseudomonadati</taxon>
        <taxon>Pseudomonadota</taxon>
        <taxon>Betaproteobacteria</taxon>
        <taxon>Nitrosomonadales</taxon>
        <taxon>Nitrosomonadaceae</taxon>
        <taxon>Nitrosomonas</taxon>
    </lineage>
</organism>
<gene>
    <name evidence="1" type="primary">dxr</name>
    <name type="ordered locus">Neut_2029</name>
</gene>
<protein>
    <recommendedName>
        <fullName evidence="1">1-deoxy-D-xylulose 5-phosphate reductoisomerase</fullName>
        <shortName evidence="1">DXP reductoisomerase</shortName>
        <ecNumber evidence="1">1.1.1.267</ecNumber>
    </recommendedName>
    <alternativeName>
        <fullName evidence="1">1-deoxyxylulose-5-phosphate reductoisomerase</fullName>
    </alternativeName>
    <alternativeName>
        <fullName evidence="1">2-C-methyl-D-erythritol 4-phosphate synthase</fullName>
    </alternativeName>
</protein>
<keyword id="KW-0414">Isoprene biosynthesis</keyword>
<keyword id="KW-0464">Manganese</keyword>
<keyword id="KW-0479">Metal-binding</keyword>
<keyword id="KW-0521">NADP</keyword>
<keyword id="KW-0560">Oxidoreductase</keyword>
<accession>Q0AEI0</accession>
<proteinExistence type="inferred from homology"/>
<comment type="function">
    <text evidence="1">Catalyzes the NADPH-dependent rearrangement and reduction of 1-deoxy-D-xylulose-5-phosphate (DXP) to 2-C-methyl-D-erythritol 4-phosphate (MEP).</text>
</comment>
<comment type="catalytic activity">
    <reaction evidence="1">
        <text>2-C-methyl-D-erythritol 4-phosphate + NADP(+) = 1-deoxy-D-xylulose 5-phosphate + NADPH + H(+)</text>
        <dbReference type="Rhea" id="RHEA:13717"/>
        <dbReference type="ChEBI" id="CHEBI:15378"/>
        <dbReference type="ChEBI" id="CHEBI:57783"/>
        <dbReference type="ChEBI" id="CHEBI:57792"/>
        <dbReference type="ChEBI" id="CHEBI:58262"/>
        <dbReference type="ChEBI" id="CHEBI:58349"/>
        <dbReference type="EC" id="1.1.1.267"/>
    </reaction>
    <physiologicalReaction direction="right-to-left" evidence="1">
        <dbReference type="Rhea" id="RHEA:13719"/>
    </physiologicalReaction>
</comment>
<comment type="cofactor">
    <cofactor evidence="1">
        <name>Mg(2+)</name>
        <dbReference type="ChEBI" id="CHEBI:18420"/>
    </cofactor>
    <cofactor evidence="1">
        <name>Mn(2+)</name>
        <dbReference type="ChEBI" id="CHEBI:29035"/>
    </cofactor>
</comment>
<comment type="pathway">
    <text evidence="1">Isoprenoid biosynthesis; isopentenyl diphosphate biosynthesis via DXP pathway; isopentenyl diphosphate from 1-deoxy-D-xylulose 5-phosphate: step 1/6.</text>
</comment>
<comment type="similarity">
    <text evidence="1">Belongs to the DXR family.</text>
</comment>
<evidence type="ECO:0000255" key="1">
    <source>
        <dbReference type="HAMAP-Rule" id="MF_00183"/>
    </source>
</evidence>